<organismHost>
    <name type="scientific">Homo sapiens</name>
    <name type="common">Human</name>
    <dbReference type="NCBI Taxonomy" id="9606"/>
</organismHost>
<feature type="initiator methionine" description="Removed; by host" evidence="4">
    <location>
        <position position="1"/>
    </location>
</feature>
<feature type="chain" id="PRO_0000259828" description="Gag-Pro-Pol polyprotein">
    <location>
        <begin position="2"/>
        <end position="1462"/>
    </location>
</feature>
<feature type="chain" id="PRO_0000259829" description="Matrix protein p19">
    <location>
        <begin position="2"/>
        <end position="130"/>
    </location>
</feature>
<feature type="chain" id="PRO_0000259830" description="Capsid protein p24">
    <location>
        <begin position="131"/>
        <end position="344"/>
    </location>
</feature>
<feature type="chain" id="PRO_0000259831" description="Nucleocapsid protein p15-pro">
    <location>
        <begin position="345"/>
        <end position="449"/>
    </location>
</feature>
<feature type="chain" id="PRO_0000259832" description="Protease">
    <location>
        <begin position="450"/>
        <end position="574"/>
    </location>
</feature>
<feature type="peptide" id="PRO_0000259833" description="p1">
    <location>
        <begin position="575"/>
        <end position="582"/>
    </location>
</feature>
<feature type="chain" id="PRO_0000038873" description="Reverse transcriptase/ribonuclease H, p62 subunit">
    <location>
        <begin position="583"/>
        <end position="1167"/>
    </location>
</feature>
<feature type="chain" id="PRO_0000442547" description="Reverse transcriptase/ribonuclease H, p49 subunit">
    <location>
        <begin position="583"/>
        <end position="1021"/>
    </location>
</feature>
<feature type="chain" id="PRO_0000038874" description="Integrase">
    <location>
        <begin position="1168"/>
        <end position="1462"/>
    </location>
</feature>
<feature type="domain" description="Peptidase A2" evidence="6">
    <location>
        <begin position="476"/>
        <end position="554"/>
    </location>
</feature>
<feature type="domain" description="Reverse transcriptase" evidence="7">
    <location>
        <begin position="614"/>
        <end position="804"/>
    </location>
</feature>
<feature type="domain" description="RNase H type-1" evidence="8">
    <location>
        <begin position="1031"/>
        <end position="1165"/>
    </location>
</feature>
<feature type="domain" description="Integrase catalytic" evidence="9">
    <location>
        <begin position="1219"/>
        <end position="1388"/>
    </location>
</feature>
<feature type="zinc finger region" description="CCHC-type 1" evidence="5">
    <location>
        <begin position="355"/>
        <end position="372"/>
    </location>
</feature>
<feature type="zinc finger region" description="CCHC-type 2" evidence="5">
    <location>
        <begin position="378"/>
        <end position="395"/>
    </location>
</feature>
<feature type="DNA-binding region" description="Integrase-type" evidence="10">
    <location>
        <begin position="1393"/>
        <end position="1443"/>
    </location>
</feature>
<feature type="region of interest" description="Disordered" evidence="12">
    <location>
        <begin position="93"/>
        <end position="144"/>
    </location>
</feature>
<feature type="short sequence motif" description="PPXY motif" evidence="2">
    <location>
        <begin position="118"/>
        <end position="121"/>
    </location>
</feature>
<feature type="short sequence motif" description="PTAP/PSAP motif" evidence="2">
    <location>
        <begin position="124"/>
        <end position="127"/>
    </location>
</feature>
<feature type="active site" description="For protease activity; shared with dimeric partner" evidence="11">
    <location>
        <position position="481"/>
    </location>
</feature>
<feature type="binding site" evidence="7">
    <location>
        <position position="680"/>
    </location>
    <ligand>
        <name>Mg(2+)</name>
        <dbReference type="ChEBI" id="CHEBI:18420"/>
        <label>1</label>
        <note>catalytic; for reverse transcriptase activity</note>
    </ligand>
</feature>
<feature type="binding site" evidence="7">
    <location>
        <position position="755"/>
    </location>
    <ligand>
        <name>Mg(2+)</name>
        <dbReference type="ChEBI" id="CHEBI:18420"/>
        <label>1</label>
        <note>catalytic; for reverse transcriptase activity</note>
    </ligand>
</feature>
<feature type="binding site" evidence="7">
    <location>
        <position position="756"/>
    </location>
    <ligand>
        <name>Mg(2+)</name>
        <dbReference type="ChEBI" id="CHEBI:18420"/>
        <label>1</label>
        <note>catalytic; for reverse transcriptase activity</note>
    </ligand>
</feature>
<feature type="binding site" evidence="8">
    <location>
        <position position="1040"/>
    </location>
    <ligand>
        <name>Mg(2+)</name>
        <dbReference type="ChEBI" id="CHEBI:18420"/>
        <label>2</label>
        <note>catalytic; for RNase H activity</note>
    </ligand>
</feature>
<feature type="binding site" evidence="8">
    <location>
        <position position="1074"/>
    </location>
    <ligand>
        <name>Mg(2+)</name>
        <dbReference type="ChEBI" id="CHEBI:18420"/>
        <label>2</label>
        <note>catalytic; for RNase H activity</note>
    </ligand>
</feature>
<feature type="binding site" evidence="8">
    <location>
        <position position="1096"/>
    </location>
    <ligand>
        <name>Mg(2+)</name>
        <dbReference type="ChEBI" id="CHEBI:18420"/>
        <label>2</label>
        <note>catalytic; for RNase H activity</note>
    </ligand>
</feature>
<feature type="binding site" evidence="8">
    <location>
        <position position="1157"/>
    </location>
    <ligand>
        <name>Mg(2+)</name>
        <dbReference type="ChEBI" id="CHEBI:18420"/>
        <label>2</label>
        <note>catalytic; for RNase H activity</note>
    </ligand>
</feature>
<feature type="binding site" evidence="9">
    <location>
        <position position="1230"/>
    </location>
    <ligand>
        <name>Mg(2+)</name>
        <dbReference type="ChEBI" id="CHEBI:18420"/>
        <label>3</label>
        <note>catalytic; for integrase activity</note>
    </ligand>
</feature>
<feature type="binding site" evidence="9">
    <location>
        <position position="1287"/>
    </location>
    <ligand>
        <name>Mg(2+)</name>
        <dbReference type="ChEBI" id="CHEBI:18420"/>
        <label>3</label>
        <note>catalytic; for integrase activity</note>
    </ligand>
</feature>
<feature type="site" description="Cleavage; by viral protease" evidence="13">
    <location>
        <begin position="130"/>
        <end position="131"/>
    </location>
</feature>
<feature type="site" description="Cleavage; by viral protease" evidence="13">
    <location>
        <begin position="344"/>
        <end position="345"/>
    </location>
</feature>
<feature type="site" description="Cleavage; by viral protease" evidence="13">
    <location>
        <begin position="449"/>
        <end position="450"/>
    </location>
</feature>
<feature type="site" description="Cleavage; by viral protease" evidence="13 20">
    <location>
        <begin position="574"/>
        <end position="575"/>
    </location>
</feature>
<feature type="site" description="Cleavage; by viral protease" evidence="23">
    <location>
        <begin position="582"/>
        <end position="583"/>
    </location>
</feature>
<feature type="site" description="Cleavage; by viral protease" evidence="19">
    <location>
        <begin position="1021"/>
        <end position="1022"/>
    </location>
</feature>
<feature type="site" description="Cleavage; by viral protease" evidence="16">
    <location>
        <begin position="1167"/>
        <end position="1168"/>
    </location>
</feature>
<feature type="modified residue" description="Phosphoserine; by host MAPK1" evidence="2">
    <location>
        <position position="105"/>
    </location>
</feature>
<feature type="lipid moiety-binding region" description="N-myristoyl glycine; by host" evidence="4 14">
    <location>
        <position position="2"/>
    </location>
</feature>
<feature type="sequence variant">
    <original>LP</original>
    <variation>FL</variation>
    <location>
        <begin position="440"/>
        <end position="441"/>
    </location>
</feature>
<feature type="sequence variant">
    <original>R</original>
    <variation>G</variation>
    <location>
        <position position="569"/>
    </location>
</feature>
<feature type="sequence variant">
    <original>P</original>
    <variation>S</variation>
    <location>
        <position position="621"/>
    </location>
</feature>
<feature type="mutagenesis site" description="Complete loss of myristoylation the polyprotein. The concomitent loss of binding to the host cell membrane impairs the formation of viral particles." evidence="14">
    <original>G</original>
    <variation>A</variation>
    <location>
        <position position="2"/>
    </location>
</feature>
<feature type="mutagenesis site" description="Complete loss of protease activity." evidence="18">
    <original>M</original>
    <variation>A</variation>
    <variation>D</variation>
    <variation>N</variation>
    <location>
        <position position="486"/>
    </location>
</feature>
<feature type="mutagenesis site" description="Almost no effect on protease activity." evidence="18">
    <original>M</original>
    <variation>I</variation>
    <location>
        <position position="486"/>
    </location>
</feature>
<feature type="mutagenesis site" description="Decrease in protease activity." evidence="18">
    <original>M</original>
    <variation>V</variation>
    <location>
        <position position="486"/>
    </location>
</feature>
<feature type="mutagenesis site" description="Complete loss of protease activity." evidence="18">
    <original>L</original>
    <variation>G</variation>
    <location>
        <position position="506"/>
    </location>
</feature>
<feature type="mutagenesis site" description="Decrease in protease activity." evidence="18">
    <original>A</original>
    <variation>I</variation>
    <location>
        <position position="508"/>
    </location>
</feature>
<feature type="mutagenesis site" description="Complete loss of protease activity." evidence="18">
    <original>F</original>
    <variation>Q</variation>
    <location>
        <position position="516"/>
    </location>
</feature>
<feature type="mutagenesis site" description="Almost complete loss of protease activity." evidence="18">
    <original>N</original>
    <variation>T</variation>
    <location>
        <position position="545"/>
    </location>
</feature>
<feature type="mutagenesis site" description="Almost complete loss of protease activity." evidence="18">
    <original>N</original>
    <variation>P</variation>
    <location>
        <position position="546"/>
    </location>
</feature>
<feature type="mutagenesis site" description="Almost complete loss of protease activity." evidence="18">
    <original>W</original>
    <variation>V</variation>
    <location>
        <position position="547"/>
    </location>
</feature>
<feature type="sequence conflict" description="In Ref. 5; AA sequence." evidence="24" ref="5">
    <original>NNW</original>
    <variation>GSM</variation>
    <location>
        <begin position="545"/>
        <end position="547"/>
    </location>
</feature>
<feature type="sequence conflict" description="In Ref. 5; AA sequence." evidence="24" ref="5">
    <original>R</original>
    <variation>G</variation>
    <location>
        <position position="569"/>
    </location>
</feature>
<feature type="sequence conflict" description="In Ref. 5; AA sequence." evidence="24" ref="5">
    <original>Q</original>
    <variation>E</variation>
    <location>
        <position position="592"/>
    </location>
</feature>
<feature type="strand" evidence="25">
    <location>
        <begin position="451"/>
        <end position="453"/>
    </location>
</feature>
<feature type="strand" evidence="26">
    <location>
        <begin position="456"/>
        <end position="458"/>
    </location>
</feature>
<feature type="strand" evidence="25">
    <location>
        <begin position="461"/>
        <end position="467"/>
    </location>
</feature>
<feature type="strand" evidence="25">
    <location>
        <begin position="469"/>
        <end position="471"/>
    </location>
</feature>
<feature type="strand" evidence="25">
    <location>
        <begin position="474"/>
        <end position="480"/>
    </location>
</feature>
<feature type="strand" evidence="25">
    <location>
        <begin position="488"/>
        <end position="490"/>
    </location>
</feature>
<feature type="helix" evidence="25">
    <location>
        <begin position="491"/>
        <end position="493"/>
    </location>
</feature>
<feature type="strand" evidence="25">
    <location>
        <begin position="500"/>
        <end position="502"/>
    </location>
</feature>
<feature type="strand" evidence="25">
    <location>
        <begin position="505"/>
        <end position="507"/>
    </location>
</feature>
<feature type="strand" evidence="25">
    <location>
        <begin position="510"/>
        <end position="521"/>
    </location>
</feature>
<feature type="strand" evidence="25">
    <location>
        <begin position="523"/>
        <end position="526"/>
    </location>
</feature>
<feature type="strand" evidence="25">
    <location>
        <begin position="534"/>
        <end position="537"/>
    </location>
</feature>
<feature type="strand" evidence="25">
    <location>
        <begin position="540"/>
        <end position="542"/>
    </location>
</feature>
<feature type="helix" evidence="25">
    <location>
        <begin position="552"/>
        <end position="557"/>
    </location>
</feature>
<feature type="strand" evidence="25">
    <location>
        <begin position="561"/>
        <end position="563"/>
    </location>
</feature>
<evidence type="ECO:0000250" key="1"/>
<evidence type="ECO:0000250" key="2">
    <source>
        <dbReference type="UniProtKB" id="P03345"/>
    </source>
</evidence>
<evidence type="ECO:0000250" key="3">
    <source>
        <dbReference type="UniProtKB" id="P03363"/>
    </source>
</evidence>
<evidence type="ECO:0000255" key="4"/>
<evidence type="ECO:0000255" key="5">
    <source>
        <dbReference type="PROSITE-ProRule" id="PRU00047"/>
    </source>
</evidence>
<evidence type="ECO:0000255" key="6">
    <source>
        <dbReference type="PROSITE-ProRule" id="PRU00275"/>
    </source>
</evidence>
<evidence type="ECO:0000255" key="7">
    <source>
        <dbReference type="PROSITE-ProRule" id="PRU00405"/>
    </source>
</evidence>
<evidence type="ECO:0000255" key="8">
    <source>
        <dbReference type="PROSITE-ProRule" id="PRU00408"/>
    </source>
</evidence>
<evidence type="ECO:0000255" key="9">
    <source>
        <dbReference type="PROSITE-ProRule" id="PRU00457"/>
    </source>
</evidence>
<evidence type="ECO:0000255" key="10">
    <source>
        <dbReference type="PROSITE-ProRule" id="PRU00506"/>
    </source>
</evidence>
<evidence type="ECO:0000255" key="11">
    <source>
        <dbReference type="PROSITE-ProRule" id="PRU10094"/>
    </source>
</evidence>
<evidence type="ECO:0000256" key="12">
    <source>
        <dbReference type="SAM" id="MobiDB-lite"/>
    </source>
</evidence>
<evidence type="ECO:0000269" key="13">
    <source>
    </source>
</evidence>
<evidence type="ECO:0000269" key="14">
    <source>
    </source>
</evidence>
<evidence type="ECO:0000269" key="15">
    <source>
    </source>
</evidence>
<evidence type="ECO:0000269" key="16">
    <source>
    </source>
</evidence>
<evidence type="ECO:0000269" key="17">
    <source>
    </source>
</evidence>
<evidence type="ECO:0000269" key="18">
    <source>
    </source>
</evidence>
<evidence type="ECO:0000269" key="19">
    <source>
    </source>
</evidence>
<evidence type="ECO:0000269" key="20">
    <source>
    </source>
</evidence>
<evidence type="ECO:0000269" key="21">
    <source>
    </source>
</evidence>
<evidence type="ECO:0000269" key="22">
    <source>
    </source>
</evidence>
<evidence type="ECO:0000303" key="23">
    <source>
    </source>
</evidence>
<evidence type="ECO:0000305" key="24"/>
<evidence type="ECO:0007829" key="25">
    <source>
        <dbReference type="PDB" id="2B7F"/>
    </source>
</evidence>
<evidence type="ECO:0007829" key="26">
    <source>
        <dbReference type="PDB" id="4YDG"/>
    </source>
</evidence>
<organism>
    <name type="scientific">Human T-cell leukemia virus 1 (strain Japan ATK-1 subtype A)</name>
    <name type="common">HTLV-1</name>
    <dbReference type="NCBI Taxonomy" id="11926"/>
    <lineage>
        <taxon>Viruses</taxon>
        <taxon>Riboviria</taxon>
        <taxon>Pararnavirae</taxon>
        <taxon>Artverviricota</taxon>
        <taxon>Revtraviricetes</taxon>
        <taxon>Ortervirales</taxon>
        <taxon>Retroviridae</taxon>
        <taxon>Orthoretrovirinae</taxon>
        <taxon>Deltaretrovirus</taxon>
        <taxon>Primate T-lymphotropic virus 1</taxon>
    </lineage>
</organism>
<keyword id="KW-0002">3D-structure</keyword>
<keyword id="KW-0064">Aspartyl protease</keyword>
<keyword id="KW-0167">Capsid protein</keyword>
<keyword id="KW-0903">Direct protein sequencing</keyword>
<keyword id="KW-0229">DNA integration</keyword>
<keyword id="KW-0233">DNA recombination</keyword>
<keyword id="KW-0238">DNA-binding</keyword>
<keyword id="KW-0239">DNA-directed DNA polymerase</keyword>
<keyword id="KW-0255">Endonuclease</keyword>
<keyword id="KW-1262">Eukaryotic host gene expression shutoff by virus</keyword>
<keyword id="KW-1193">Eukaryotic host translation shutoff by virus</keyword>
<keyword id="KW-1190">Host gene expression shutoff by virus</keyword>
<keyword id="KW-0945">Host-virus interaction</keyword>
<keyword id="KW-0378">Hydrolase</keyword>
<keyword id="KW-0449">Lipoprotein</keyword>
<keyword id="KW-0460">Magnesium</keyword>
<keyword id="KW-0479">Metal-binding</keyword>
<keyword id="KW-0511">Multifunctional enzyme</keyword>
<keyword id="KW-0519">Myristate</keyword>
<keyword id="KW-0540">Nuclease</keyword>
<keyword id="KW-0548">Nucleotidyltransferase</keyword>
<keyword id="KW-0597">Phosphoprotein</keyword>
<keyword id="KW-0645">Protease</keyword>
<keyword id="KW-1185">Reference proteome</keyword>
<keyword id="KW-0677">Repeat</keyword>
<keyword id="KW-0688">Ribosomal frameshifting</keyword>
<keyword id="KW-0694">RNA-binding</keyword>
<keyword id="KW-0695">RNA-directed DNA polymerase</keyword>
<keyword id="KW-0808">Transferase</keyword>
<keyword id="KW-1179">Viral genome integration</keyword>
<keyword id="KW-0543">Viral nucleoprotein</keyword>
<keyword id="KW-0946">Virion</keyword>
<keyword id="KW-1160">Virus entry into host cell</keyword>
<keyword id="KW-0862">Zinc</keyword>
<keyword id="KW-0863">Zinc-finger</keyword>
<accession>P03362</accession>
<accession>Q85590</accession>
<reference key="1">
    <citation type="journal article" date="1983" name="Proc. Natl. Acad. Sci. U.S.A.">
        <title>Human adult T-cell leukemia virus: complete nucleotide sequence of the provirus genome integrated in leukemia cell DNA.</title>
        <authorList>
            <person name="Seiki M."/>
            <person name="Hattori S."/>
            <person name="Hirayama Y."/>
            <person name="Yoshida M.C."/>
        </authorList>
    </citation>
    <scope>NUCLEOTIDE SEQUENCE [GENOMIC DNA]</scope>
</reference>
<reference key="2">
    <citation type="journal article" date="1986" name="Biochem. Biophys. Res. Commun.">
        <title>Identification of a protease gene of human T-cell leukemia virus type I (HTLV-I) and its structural comparison.</title>
        <authorList>
            <person name="Nam S.H."/>
            <person name="Hatanaka M."/>
        </authorList>
    </citation>
    <scope>NUCLEOTIDE SEQUENCE [GENOMIC RNA] OF 395-672</scope>
</reference>
<reference key="3">
    <citation type="journal article" date="1988" name="EMBO J.">
        <title>Enzymatic amplification of exogenous and endogenous retroviral sequences from DNA of patients with tropical spastic paraparesis.</title>
        <authorList>
            <person name="Bangham C.R.M."/>
            <person name="Daenke S."/>
            <person name="Philips R.E."/>
            <person name="Cruickshank J.K."/>
            <person name="Bell J.I."/>
        </authorList>
    </citation>
    <scope>NUCLEOTIDE SEQUENCE [GENOMIC DNA] OF 635-751</scope>
</reference>
<reference key="4">
    <citation type="journal article" date="1982" name="Proc. Natl. Acad. Sci. U.S.A.">
        <title>Primary structure analysis of the major internal protein p24 of human type C T-cell leukemia virus.</title>
        <authorList>
            <person name="Oroszlan S."/>
            <person name="Sarngadharan M.G."/>
            <person name="Copeland T.D."/>
            <person name="Kalyanaraman V.S."/>
            <person name="Gilden R.V."/>
            <person name="Gallo R.C."/>
        </authorList>
    </citation>
    <scope>PROTEIN SEQUENCE OF 131-155</scope>
</reference>
<reference key="5">
    <citation type="journal article" date="2001" name="Arch. Biochem. Biophys.">
        <title>Proteolytic processing of the human T-cell lymphotropic virus 1 reverse transcriptase: identification of the N-terminal cleavage site by mass spectrometry.</title>
        <authorList>
            <person name="Agbuya P.G."/>
            <person name="Sherman N.E."/>
            <person name="Moen L.K."/>
        </authorList>
    </citation>
    <scope>PROTEIN SEQUENCE OF 545-611</scope>
    <scope>PROTEOLYTIC CLEAVAGE (GAG-PRO-POL POLYPROTEIN)</scope>
</reference>
<reference key="6">
    <citation type="journal article" date="1993" name="J. Virol.">
        <title>Characterization of ribosomal frameshifting for expression of pol gene products of human T-cell leukemia virus type I.</title>
        <authorList>
            <person name="Nam S.H."/>
            <person name="Copeland T.D."/>
            <person name="Hatanaka M."/>
            <person name="Oroszlan S."/>
        </authorList>
    </citation>
    <scope>PROTEIN SEQUENCE OF 596-612</scope>
    <scope>RIBOSOMAL FRAMESHIFT</scope>
</reference>
<reference key="7">
    <citation type="journal article" date="1988" name="J. Virol.">
        <title>Processing of gag precursor polyprotein of human T-cell leukemia virus type I by virus-encoded protease.</title>
        <authorList>
            <person name="Nam S.H."/>
            <person name="Kidokoro M."/>
            <person name="Shida H."/>
            <person name="Hatanaka M."/>
        </authorList>
    </citation>
    <scope>FUNCTION (PROTEASE)</scope>
</reference>
<reference key="8">
    <citation type="journal article" date="1999" name="J. Biol. Chem.">
        <title>Stabilization from autoproteolysis and kinetic characterization of the human T-cell leukemia virus type 1 proteinase.</title>
        <authorList>
            <person name="Louis J.M."/>
            <person name="Oroszlan S."/>
            <person name="Toezser J."/>
        </authorList>
    </citation>
    <scope>CHARACTERIZATION (PROTEASE)</scope>
    <scope>PROTEOLYTIC CLEAVAGE (GAG-PRO-POL POLYPROTEIN)</scope>
</reference>
<reference key="9">
    <citation type="journal article" date="2001" name="J. Virol.">
        <title>The NH2-terminal domain of the human T-cell leukemia virus type 1 capsid protein is involved in particle formation.</title>
        <authorList>
            <person name="Rayne F."/>
            <person name="Bouamr F."/>
            <person name="Lalanne J."/>
            <person name="Mamoun R.Z."/>
        </authorList>
    </citation>
    <scope>DOMAIN (CAPSID PROTEIN P24)</scope>
    <scope>MUTAGENESIS OF GLY-2</scope>
    <scope>MYRISTOYLATION AT GLY-2</scope>
</reference>
<reference key="10">
    <citation type="journal article" date="2003" name="Chem. Biol.">
        <title>Understanding HTLV-I protease.</title>
        <authorList>
            <person name="Shuker S.B."/>
            <person name="Mariani V.L."/>
            <person name="Herger B.E."/>
            <person name="Dennison K.J."/>
        </authorList>
    </citation>
    <scope>REVIEW (PROTEASE)</scope>
</reference>
<reference key="11">
    <citation type="journal article" date="2003" name="J. Virol.">
        <title>The eukaryotic translation initiation factor 4GI is cleaved by different retroviral proteases.</title>
        <authorList>
            <person name="Alvarez E."/>
            <person name="Menendez-Arias L."/>
            <person name="Carrasco L."/>
        </authorList>
    </citation>
    <scope>FUNCTION (PROTEASE)</scope>
</reference>
<reference key="12">
    <citation type="journal article" date="2003" name="Biochem. Biophys. Res. Commun.">
        <title>Identification of the RT-RH/IN cleavage site of HTLV-I.</title>
        <authorList>
            <person name="Mariani V.L."/>
            <person name="Shuker S.B."/>
        </authorList>
    </citation>
    <scope>PROTEOLYTIC CLEAVAGE (GAG-PRO-POL POLYPROTEIN)</scope>
</reference>
<reference key="13">
    <citation type="journal article" date="2004" name="J. Biol. Chem.">
        <title>Narrow substrate specificity and sensitivity toward ligand-binding site mutations of human T-cell Leukemia virus type 1 protease.</title>
        <authorList>
            <person name="Kadas J."/>
            <person name="Weber I.T."/>
            <person name="Bagossi P."/>
            <person name="Miklossy G."/>
            <person name="Boross P."/>
            <person name="Oroszlan S."/>
            <person name="Toezser J."/>
        </authorList>
    </citation>
    <scope>CHARACTERIZATION (PROTEASE)</scope>
    <scope>FUNCTION (PROTEASE)</scope>
    <scope>CATALYTIC ACTIVITY (PROTEASE)</scope>
    <scope>MUTAGENESIS OF MET-486; LEU-506; ALA-508; PHE-516; ASN-545; ASN-546 AND TRP-547</scope>
    <scope>PROTEOLYTIC CLEAVAGE (GAG-PRO-POL POLYPROTEIN)</scope>
</reference>
<reference key="14">
    <citation type="journal article" date="2006" name="Bioorg. Med. Chem. Lett.">
        <title>Evaluations of substrate specificity and inhibition at PR/p3 cleavage site of HTLV-1 protease.</title>
        <authorList>
            <person name="Naka H."/>
            <person name="Teruya K."/>
            <person name="Bang J.K."/>
            <person name="Aimoto S."/>
            <person name="Tatsumi T."/>
            <person name="Konno H."/>
            <person name="Nosaka K."/>
            <person name="Akaji K."/>
        </authorList>
    </citation>
    <scope>PROTEOLYTIC CLEAVAGE (GAG-PRO-POL POLYPROTEIN)</scope>
</reference>
<reference key="15">
    <citation type="journal article" date="2006" name="J. Biol. Chem.">
        <title>Synthesis, processing, and composition of the virion-associated HTLV-1 reverse transcriptase.</title>
        <authorList>
            <person name="Mitchell M.S."/>
            <person name="Toezser J."/>
            <person name="Princler G."/>
            <person name="Lloyd P.A."/>
            <person name="Auth A."/>
            <person name="Derse D."/>
        </authorList>
    </citation>
    <scope>PROTEOLYTIC CLEAVAGE (GAG-PRO-POL POLYPROTEIN)</scope>
</reference>
<protein>
    <recommendedName>
        <fullName>Gag-Pro-Pol polyprotein</fullName>
    </recommendedName>
    <alternativeName>
        <fullName>Pr160Gag-Pro-Pol</fullName>
    </alternativeName>
    <component>
        <recommendedName>
            <fullName>Matrix protein p19</fullName>
            <shortName>MA</shortName>
        </recommendedName>
    </component>
    <component>
        <recommendedName>
            <fullName>Capsid protein p24</fullName>
            <shortName>CA</shortName>
        </recommendedName>
    </component>
    <component>
        <recommendedName>
            <fullName>Nucleocapsid protein p15-pro</fullName>
            <shortName>NC'</shortName>
            <shortName>NC-pro</shortName>
        </recommendedName>
    </component>
    <component>
        <recommendedName>
            <fullName>Protease</fullName>
            <shortName>PR</shortName>
            <ecNumber evidence="6 18">3.4.23.-</ecNumber>
        </recommendedName>
    </component>
    <component>
        <recommendedName>
            <fullName>p1</fullName>
        </recommendedName>
    </component>
    <component>
        <recommendedName>
            <fullName>Reverse transcriptase/ribonuclease H, p49 subunit</fullName>
            <shortName>p49 RT</shortName>
            <ecNumber evidence="7">2.7.7.49</ecNumber>
            <ecNumber evidence="7">2.7.7.7</ecNumber>
            <ecNumber evidence="8">3.1.26.4</ecNumber>
        </recommendedName>
    </component>
    <component>
        <recommendedName>
            <fullName>Reverse transcriptase/ribonuclease H, p62 subunit</fullName>
            <shortName>p62 RT</shortName>
            <ecNumber evidence="7">2.7.7.49</ecNumber>
            <ecNumber evidence="7">2.7.7.7</ecNumber>
            <ecNumber evidence="8">3.1.26.4</ecNumber>
        </recommendedName>
    </component>
    <component>
        <recommendedName>
            <fullName>Integrase</fullName>
            <shortName>IN</shortName>
            <ecNumber evidence="3">2.7.7.-</ecNumber>
            <ecNumber evidence="3">3.1.-.-</ecNumber>
        </recommendedName>
    </component>
</protein>
<proteinExistence type="evidence at protein level"/>
<comment type="function">
    <molecule>Gag-Pro-Pol polyprotein</molecule>
    <text evidence="2">The matrix domain targets Gag, Gag-Pro and Gag-Pro-Pol polyproteins to the plasma membrane via a multipartite membrane binding signal, that includes its myristoylated N-terminus.</text>
</comment>
<comment type="function">
    <molecule>Matrix protein p19</molecule>
    <text evidence="2">Matrix protein.</text>
</comment>
<comment type="function">
    <molecule>Capsid protein p24</molecule>
    <text evidence="24">Forms the spherical core of the virus that encapsulates the genomic RNA-nucleocapsid complex.</text>
</comment>
<comment type="function">
    <molecule>Nucleocapsid protein p15-pro</molecule>
    <text evidence="2">Binds strongly to viral nucleic acids and promote their aggregation. Also destabilizes the nucleic acids duplexes via highly structured zinc-binding motifs.</text>
</comment>
<comment type="function">
    <molecule>Protease</molecule>
    <text evidence="6 17 18 21">The aspartyl protease mediates proteolytic cleavages of Gag and Gag-Pol polyproteins during or shortly after the release of the virion from the plasma membrane. Cleavages take place as an ordered, step-wise cascade to yield mature proteins. This process is called maturation. Displays maximal activity during the budding process just prior to particle release from the cell. Cleaves the translation initiation factor eIF4G leading to the inhibition of host cap-dependent translation (PubMed:14610163).</text>
</comment>
<comment type="function">
    <molecule>Reverse transcriptase/ribonuclease H, p49 subunit</molecule>
    <text evidence="1">RT is a multifunctional enzyme that converts the viral RNA genome into dsDNA in the cytoplasm, shortly after virus entry into the cell. This enzyme displays a DNA polymerase activity that can copy either DNA or RNA templates, and a ribonuclease H (RNase H) activity that cleaves the RNA strand of RNA-DNA heteroduplexes in a partially processive 3' to 5'-endonucleasic mode. Conversion of viral genomic RNA into dsDNA requires many steps. A tRNA-Pro binds to the primer-binding site (PBS) situated at the 5'-end of the viral RNA. RT uses the 3' end of the tRNA primer to perform a short round of RNA-dependent minus-strand DNA synthesis. The reading proceeds through the U5 region and ends after the repeated (R) region which is present at both ends of viral RNA. The portion of the RNA-DNA heteroduplex is digested by the RNase H, resulting in a ssDNA product attached to the tRNA primer. This ssDNA/tRNA hybridizes with the identical R region situated at the 3' end of viral RNA. This template exchange, known as minus-strand DNA strong stop transfer, can be either intra- or intermolecular. RT uses the 3' end of this newly synthesized short ssDNA to perform the RNA-dependent minus-strand DNA synthesis of the whole template. RNase H digests the RNA template except for a polypurine tract (PPT) situated at the 5' end of the genome. It is not clear if both polymerase and RNase H activities are simultaneous. RNase H probably can proceed both in a polymerase-dependent (RNA cut into small fragments by the same RT performing DNA synthesis) and a polymerase-independent mode (cleavage of remaining RNA fragments by free RTs). Secondly, RT performs DNA-directed plus-strand DNA synthesis using the PPT that has not been removed by RNase H as primer. PPT and tRNA primers are then removed by RNase H. The 3' and 5' ssDNA PBS regions hybridize to form a circular dsDNA intermediate. Strand displacement synthesis by RT to the PBS and PPT ends produces a blunt ended, linear dsDNA copy of the viral genome that includes long terminal repeats (LTRs) at both ends (By similarity).</text>
</comment>
<comment type="function">
    <molecule>Reverse transcriptase/ribonuclease H, p62 subunit</molecule>
    <text evidence="1">RT is a multifunctional enzyme that converts the viral RNA genome into dsDNA in the cytoplasm, shortly after virus entry into the cell. This enzyme displays a DNA polymerase activity that can copy either DNA or RNA templates, and a ribonuclease H (RNase H) activity that cleaves the RNA strand of RNA-DNA heteroduplexes in a partially processive 3' to 5'-endonucleasic mode. Conversion of viral genomic RNA into dsDNA requires many steps. A tRNA-Pro binds to the primer-binding site (PBS) situated at the 5'-end of the viral RNA. RT uses the 3' end of the tRNA primer to perform a short round of RNA-dependent minus-strand DNA synthesis. The reading proceeds through the U5 region and ends after the repeated (R) region which is present at both ends of viral RNA. The portion of the RNA-DNA heteroduplex is digested by the RNase H, resulting in a ssDNA product attached to the tRNA primer. This ssDNA/tRNA hybridizes with the identical R region situated at the 3' end of viral RNA. This template exchange, known as minus-strand DNA strong stop transfer, can be either intra- or intermolecular. RT uses the 3' end of this newly synthesized short ssDNA to perform the RNA-dependent minus-strand DNA synthesis of the whole template. RNase H digests the RNA template except for a polypurine tract (PPT) situated at the 5' end of the genome. It is not clear if both polymerase and RNase H activities are simultaneous. RNase H probably can proceed both in a polymerase-dependent (RNA cut into small fragments by the same RT performing DNA synthesis) and a polymerase-independent mode (cleavage of remaining RNA fragments by free RTs). Secondly, RT performs DNA-directed plus-strand DNA synthesis using the PPT that has not been removed by RNase H as primer. PPT and tRNA primers are then removed by RNase H. The 3' and 5' ssDNA PBS regions hybridize to form a circular dsDNA intermediate. Strand displacement synthesis by RT to the PBS and PPT ends produces a blunt ended, linear dsDNA copy of the viral genome that includes long terminal repeats (LTRs) at both ends (By similarity).</text>
</comment>
<comment type="function">
    <molecule>Integrase</molecule>
    <text evidence="24">Catalyzes viral DNA integration into the host chromosome, by performing a series of DNA cutting and joining reactions.</text>
</comment>
<comment type="catalytic activity">
    <reaction evidence="8">
        <text>Endonucleolytic cleavage to 5'-phosphomonoester.</text>
        <dbReference type="EC" id="3.1.26.4"/>
    </reaction>
</comment>
<comment type="catalytic activity">
    <reaction evidence="7">
        <text>DNA(n) + a 2'-deoxyribonucleoside 5'-triphosphate = DNA(n+1) + diphosphate</text>
        <dbReference type="Rhea" id="RHEA:22508"/>
        <dbReference type="Rhea" id="RHEA-COMP:17339"/>
        <dbReference type="Rhea" id="RHEA-COMP:17340"/>
        <dbReference type="ChEBI" id="CHEBI:33019"/>
        <dbReference type="ChEBI" id="CHEBI:61560"/>
        <dbReference type="ChEBI" id="CHEBI:173112"/>
        <dbReference type="EC" id="2.7.7.49"/>
    </reaction>
</comment>
<comment type="catalytic activity">
    <reaction evidence="7">
        <text>DNA(n) + a 2'-deoxyribonucleoside 5'-triphosphate = DNA(n+1) + diphosphate</text>
        <dbReference type="Rhea" id="RHEA:22508"/>
        <dbReference type="Rhea" id="RHEA-COMP:17339"/>
        <dbReference type="Rhea" id="RHEA-COMP:17340"/>
        <dbReference type="ChEBI" id="CHEBI:33019"/>
        <dbReference type="ChEBI" id="CHEBI:61560"/>
        <dbReference type="ChEBI" id="CHEBI:173112"/>
        <dbReference type="EC" id="2.7.7.7"/>
    </reaction>
</comment>
<comment type="cofactor">
    <cofactor evidence="7">
        <name>Mg(2+)</name>
        <dbReference type="ChEBI" id="CHEBI:18420"/>
    </cofactor>
    <text evidence="7">The RT polymerase active site binds 2 magnesium ions.</text>
</comment>
<comment type="subunit">
    <molecule>Gag-Pro-Pol polyprotein</molecule>
    <text evidence="2">Homodimer; the homodimers are part of the immature particles. Interacts with human TSG101 and NEDD4; these interactions are essential for budding and release of viral particles.</text>
</comment>
<comment type="subunit">
    <molecule>Matrix protein p19</molecule>
    <text evidence="2">Homodimer; further assembles as homohexamers.</text>
</comment>
<comment type="subcellular location">
    <molecule>Matrix protein p19</molecule>
    <subcellularLocation>
        <location evidence="2">Virion</location>
    </subcellularLocation>
</comment>
<comment type="subcellular location">
    <molecule>Capsid protein p24</molecule>
    <subcellularLocation>
        <location evidence="2">Virion</location>
    </subcellularLocation>
</comment>
<comment type="subcellular location">
    <molecule>Nucleocapsid protein p15-pro</molecule>
    <subcellularLocation>
        <location evidence="2">Virion</location>
    </subcellularLocation>
</comment>
<comment type="alternative products">
    <event type="ribosomal frameshifting"/>
    <isoform>
        <id>P03362-1</id>
        <name>Gag-Pro-Pol polyprotein</name>
        <sequence type="displayed"/>
    </isoform>
    <isoform>
        <id>P10274-1</id>
        <name>Gag-Pro polyprotein</name>
        <sequence type="external"/>
    </isoform>
    <isoform>
        <id>P03345-1</id>
        <name>Gag polyprotein</name>
        <sequence type="external"/>
    </isoform>
    <text evidence="24">This strategy of translation probably allows the virus to modulate the quantity of each viral protein.</text>
</comment>
<comment type="domain">
    <text evidence="2">Gag polyprotein: Late-budding domains (L domains) are short sequence motifs essential for viral particle release. They can occur individually or in close proximity within structural proteins. They interacts with sorting cellular proteins of the multivesicular body (MVB) pathway. Most of these proteins are class E vacuolar protein sorting factors belonging to ESCRT-I, ESCRT-II or ESCRT-III complexes. Matrix protein p19 contains two L domains: a PTAP/PSAP motif which interacts with the UEV domain of TSG101, and a PPXY motif which binds to the WW domains of the ubiquitin ligase NEDD4.</text>
</comment>
<comment type="domain">
    <molecule>Capsid protein p24</molecule>
    <text evidence="14">The capsid protein N-terminus seems to be involved in Gag-Gag interactions.</text>
</comment>
<comment type="PTM">
    <molecule>Matrix protein p19</molecule>
    <text evidence="2">Phosphorylation of the matrix protein p19 by MAPK1 seems to play a role in budding.</text>
</comment>
<comment type="PTM">
    <molecule>Gag-Pro-Pol polyprotein</molecule>
    <text evidence="2">Myristoylated. Myristoylation of the matrix (MA) domain mediates the transport and binding of Gag polyproteins to the host plasma membrane and is required for the assembly of viral particles.</text>
</comment>
<comment type="PTM">
    <molecule>Gag-Pro-Pol polyprotein</molecule>
    <text evidence="13 15 16 18 19 20">Specific enzymatic cleavages by the viral protease yield mature proteins. The polyprotein is cleaved during and after budding, this process is termed maturation. The protease is autoproteolytically processed at its N- and C-termini.</text>
</comment>
<comment type="miscellaneous">
    <text evidence="7">Reverse transcriptase/ribonuclease H: The reverse transcriptase is an error-prone enzyme that lacks a proof-reading function. High mutations rate is a direct consequence of this characteristic. RT also displays frequent template switching leading to high recombination rate. Recombination mostly occurs between homologous regions of the two copackaged RNA genomes. If these two RNA molecules derive from different viral strains, reverse transcription will give rise to highly recombinated proviral DNAs.</text>
</comment>
<comment type="miscellaneous">
    <text evidence="24">HTLV-1 lineages are divided in four clades, A (Cosmopolitan), B (Central African group), C (Melanesian group) and D (New Central African group).</text>
</comment>
<comment type="miscellaneous">
    <molecule>Isoform Gag-Pro-Pol polyprotein</molecule>
    <text evidence="22">Produced by -1 ribosomal frameshiftings at the gag-pro and gag-pol genes boundaries.</text>
</comment>
<sequence length="1462" mass="162512">MGQIFSRSASPIPRPPRGLAAHHWLNFLQAAYRLEPGPSSYDFHQLKKFLKIALETPARICPINYSLLASLLPKGYPGRVNEILHILIQTQAQIPSRPAPPPPSSPTHDPPDSDPQIPPPYVEPTAPQVLPVMHPHGAPPNHRPWQMKDLQAIKQEVSQAAPGSPQFMQTIRLAVQQFDPTAKDLQDLLQYLCSSLVASLHHQQLDSLISEAETRGITGYNPLAGPLRVQANNPQQQGLRREYQQLWLAAFAALPGSAKDPSWASILQGLEEPYHAFVERLNIALDNGLPEGTPKDPILRSLAYSNANKECQKLLQARGHTNSPLGDMLRACQTWTPKDKTKVLVVQPKKPPPNQPCFRCGKAGHWSRDCTQPRPPPGPCPLCQDPTHWKRDCPRLKPTIPEPEPEEDALLLDLPADIPHPKNLHRGGGLTSPPTLQQVLPNQDPASILPVIPLDPARRPVIKAQVDTQTSHPKTIEALLDTGADMTVLPIALFSSNTPLKNTSVLGAGGQTQDHFKLTSLPVLIRLPFRTTPIVLTSCLVDTKNNWAIIGRDALQQCQGVLYLPEAKRPPVILPIQAPAVLGLEHLPRPPQISQFPLNPERLQALQHLVRKALEAGHIEPYTGPGNNPVFPVKKANGTWRFIHDLRATNSLTIDLSSSSPGPPDLSSLPTTLAHLQTIDLRDAFFQIPLPKQFQPYFAFTVPQQCNYGPGTRYAWKVLPQGFKNSPTLFEMQLAHILQPIRQAFPQCTILQYMDDILLASPSHEDLLLLSEATMASLISHGLPVSENKTQQTPGTIKFLGQIISPNHLTYDAVPTVPIRSRWALPELQALLGEIQWVSKGTPTLRQPLHSLYCALQRHTDPRDQIYLNPSQVQSLVQLRQALSQNCRSRLVQTLPLLGAIMLTLTGTTTVVFQSKEQWPLVWLHAPLPHTSQCPWGQLLASAVLLLDKYTLQSYGLLCQTIHHNISTQTFNQFIQTSDHPSVPILLHHSHRFKNLGAQTGELWNTFLKTAAPLAPVKALMPVFTLSPVIINTAPCLFSDGSTSRAAYILWDKQILSQRSFPLPPPHKSAQRAELLGLLHGLSSARSWRCLNIFLDSKYLYHYLRTLALGTFQGRSSQAPFQALLPRLLSRKVVYLHHVRSHTNLPDPISRLNALTDALLITPVLQLSPAELHSFTHCGQTALTLQGATTTEASNILRSCHACRGGNPQHQMPRGHIRRGLLPNHIWQGDITHFKYKNTLYRLHVWVDTFSGAISATQKRKETSSEAISSLLQAIAHLGKPSYINTDNGPAYISQDFLNMCTSLAIRHTTHVPYNPTSSGLVERSNGILKTLLYKYFTDKPDLPMDNALSIALWTINHLNVLTNCHKTRWQLHHSPRLQPIPETRSLSNKQTHWYYFKLPGLNSRQWKGPQEALQEAAGAALIPVSASSAQWIPWRLLKRAACPRPVGGPADPKEKDLQHHG</sequence>
<gene>
    <name type="primary">gag-pro-pol</name>
</gene>
<name>POL_HTL1A</name>
<dbReference type="EC" id="3.4.23.-" evidence="6 18"/>
<dbReference type="EC" id="2.7.7.49" evidence="7"/>
<dbReference type="EC" id="2.7.7.7" evidence="7"/>
<dbReference type="EC" id="3.1.26.4" evidence="8"/>
<dbReference type="EC" id="2.7.7.-" evidence="3"/>
<dbReference type="EC" id="3.1.-.-" evidence="3"/>
<dbReference type="EMBL" id="J02029">
    <property type="protein sequence ID" value="AAA96673.1"/>
    <property type="status" value="ALT_SEQ"/>
    <property type="molecule type" value="Genomic_DNA"/>
</dbReference>
<dbReference type="EMBL" id="M13810">
    <property type="protein sequence ID" value="AAA46207.1"/>
    <property type="status" value="ALT_SEQ"/>
    <property type="molecule type" value="Genomic_RNA"/>
</dbReference>
<dbReference type="EMBL" id="X14144">
    <property type="protein sequence ID" value="CAA32360.1"/>
    <property type="molecule type" value="Genomic_DNA"/>
</dbReference>
<dbReference type="PIR" id="A03961">
    <property type="entry name" value="GNLJGH"/>
</dbReference>
<dbReference type="PDB" id="2B7F">
    <property type="method" value="X-ray"/>
    <property type="resolution" value="2.60 A"/>
    <property type="chains" value="A/B/C/D/E/F=450-565"/>
</dbReference>
<dbReference type="PDB" id="4YDG">
    <property type="method" value="X-ray"/>
    <property type="resolution" value="3.25 A"/>
    <property type="chains" value="A/B=450-565"/>
</dbReference>
<dbReference type="PDBsum" id="2B7F"/>
<dbReference type="PDBsum" id="4YDG"/>
<dbReference type="BMRB" id="P03362"/>
<dbReference type="SMR" id="P03362"/>
<dbReference type="DrugCentral" id="P03362"/>
<dbReference type="iPTMnet" id="P03362"/>
<dbReference type="BRENDA" id="3.4.23.B8">
    <property type="organism ID" value="2706"/>
</dbReference>
<dbReference type="EvolutionaryTrace" id="P03362"/>
<dbReference type="Proteomes" id="UP000007683">
    <property type="component" value="Segment"/>
</dbReference>
<dbReference type="GO" id="GO:0019013">
    <property type="term" value="C:viral nucleocapsid"/>
    <property type="evidence" value="ECO:0007669"/>
    <property type="project" value="UniProtKB-KW"/>
</dbReference>
<dbReference type="GO" id="GO:0004190">
    <property type="term" value="F:aspartic-type endopeptidase activity"/>
    <property type="evidence" value="ECO:0007669"/>
    <property type="project" value="UniProtKB-KW"/>
</dbReference>
<dbReference type="GO" id="GO:0003677">
    <property type="term" value="F:DNA binding"/>
    <property type="evidence" value="ECO:0007669"/>
    <property type="project" value="UniProtKB-KW"/>
</dbReference>
<dbReference type="GO" id="GO:0003887">
    <property type="term" value="F:DNA-directed DNA polymerase activity"/>
    <property type="evidence" value="ECO:0007669"/>
    <property type="project" value="UniProtKB-KW"/>
</dbReference>
<dbReference type="GO" id="GO:0035613">
    <property type="term" value="F:RNA stem-loop binding"/>
    <property type="evidence" value="ECO:0007669"/>
    <property type="project" value="TreeGrafter"/>
</dbReference>
<dbReference type="GO" id="GO:0003964">
    <property type="term" value="F:RNA-directed DNA polymerase activity"/>
    <property type="evidence" value="ECO:0007669"/>
    <property type="project" value="UniProtKB-KW"/>
</dbReference>
<dbReference type="GO" id="GO:0004523">
    <property type="term" value="F:RNA-DNA hybrid ribonuclease activity"/>
    <property type="evidence" value="ECO:0007669"/>
    <property type="project" value="UniProtKB-EC"/>
</dbReference>
<dbReference type="GO" id="GO:0005198">
    <property type="term" value="F:structural molecule activity"/>
    <property type="evidence" value="ECO:0007669"/>
    <property type="project" value="InterPro"/>
</dbReference>
<dbReference type="GO" id="GO:0008270">
    <property type="term" value="F:zinc ion binding"/>
    <property type="evidence" value="ECO:0007669"/>
    <property type="project" value="UniProtKB-KW"/>
</dbReference>
<dbReference type="GO" id="GO:0015074">
    <property type="term" value="P:DNA integration"/>
    <property type="evidence" value="ECO:0007669"/>
    <property type="project" value="UniProtKB-KW"/>
</dbReference>
<dbReference type="GO" id="GO:0006310">
    <property type="term" value="P:DNA recombination"/>
    <property type="evidence" value="ECO:0007669"/>
    <property type="project" value="UniProtKB-KW"/>
</dbReference>
<dbReference type="GO" id="GO:0075713">
    <property type="term" value="P:establishment of integrated proviral latency"/>
    <property type="evidence" value="ECO:0007669"/>
    <property type="project" value="UniProtKB-KW"/>
</dbReference>
<dbReference type="GO" id="GO:0006508">
    <property type="term" value="P:proteolysis"/>
    <property type="evidence" value="ECO:0007669"/>
    <property type="project" value="UniProtKB-KW"/>
</dbReference>
<dbReference type="GO" id="GO:0046718">
    <property type="term" value="P:symbiont entry into host cell"/>
    <property type="evidence" value="ECO:0007669"/>
    <property type="project" value="UniProtKB-KW"/>
</dbReference>
<dbReference type="GO" id="GO:0039657">
    <property type="term" value="P:symbiont-mediated suppression of host gene expression"/>
    <property type="evidence" value="ECO:0007669"/>
    <property type="project" value="UniProtKB-KW"/>
</dbReference>
<dbReference type="GO" id="GO:0044826">
    <property type="term" value="P:viral genome integration into host DNA"/>
    <property type="evidence" value="ECO:0007669"/>
    <property type="project" value="UniProtKB-KW"/>
</dbReference>
<dbReference type="GO" id="GO:0075523">
    <property type="term" value="P:viral translational frameshifting"/>
    <property type="evidence" value="ECO:0007669"/>
    <property type="project" value="UniProtKB-KW"/>
</dbReference>
<dbReference type="FunFam" id="1.10.185.10:FF:000001">
    <property type="entry name" value="Gag polyprotein"/>
    <property type="match status" value="1"/>
</dbReference>
<dbReference type="Gene3D" id="1.10.1200.30">
    <property type="match status" value="1"/>
</dbReference>
<dbReference type="Gene3D" id="3.30.70.270">
    <property type="match status" value="2"/>
</dbReference>
<dbReference type="Gene3D" id="2.40.70.10">
    <property type="entry name" value="Acid Proteases"/>
    <property type="match status" value="1"/>
</dbReference>
<dbReference type="Gene3D" id="1.10.185.10">
    <property type="entry name" value="Delta-retroviral matrix"/>
    <property type="match status" value="1"/>
</dbReference>
<dbReference type="Gene3D" id="3.10.10.10">
    <property type="entry name" value="HIV Type 1 Reverse Transcriptase, subunit A, domain 1"/>
    <property type="match status" value="1"/>
</dbReference>
<dbReference type="Gene3D" id="1.10.375.10">
    <property type="entry name" value="Human Immunodeficiency Virus Type 1 Capsid Protein"/>
    <property type="match status" value="1"/>
</dbReference>
<dbReference type="Gene3D" id="3.30.420.10">
    <property type="entry name" value="Ribonuclease H-like superfamily/Ribonuclease H"/>
    <property type="match status" value="2"/>
</dbReference>
<dbReference type="Gene3D" id="4.10.60.10">
    <property type="entry name" value="Zinc finger, CCHC-type"/>
    <property type="match status" value="1"/>
</dbReference>
<dbReference type="InterPro" id="IPR001969">
    <property type="entry name" value="Aspartic_peptidase_AS"/>
</dbReference>
<dbReference type="InterPro" id="IPR003139">
    <property type="entry name" value="D_retro_matrix"/>
</dbReference>
<dbReference type="InterPro" id="IPR043502">
    <property type="entry name" value="DNA/RNA_pol_sf"/>
</dbReference>
<dbReference type="InterPro" id="IPR045345">
    <property type="entry name" value="Gag_p24_C"/>
</dbReference>
<dbReference type="InterPro" id="IPR036862">
    <property type="entry name" value="Integrase_C_dom_sf_retrovir"/>
</dbReference>
<dbReference type="InterPro" id="IPR001037">
    <property type="entry name" value="Integrase_C_retrovir"/>
</dbReference>
<dbReference type="InterPro" id="IPR001584">
    <property type="entry name" value="Integrase_cat-core"/>
</dbReference>
<dbReference type="InterPro" id="IPR003308">
    <property type="entry name" value="Integrase_Zn-bd_dom_N"/>
</dbReference>
<dbReference type="InterPro" id="IPR001995">
    <property type="entry name" value="Peptidase_A2_cat"/>
</dbReference>
<dbReference type="InterPro" id="IPR021109">
    <property type="entry name" value="Peptidase_aspartic_dom_sf"/>
</dbReference>
<dbReference type="InterPro" id="IPR018061">
    <property type="entry name" value="Retropepsins"/>
</dbReference>
<dbReference type="InterPro" id="IPR008916">
    <property type="entry name" value="Retrov_capsid_C"/>
</dbReference>
<dbReference type="InterPro" id="IPR008919">
    <property type="entry name" value="Retrov_capsid_N"/>
</dbReference>
<dbReference type="InterPro" id="IPR010999">
    <property type="entry name" value="Retrovr_matrix"/>
</dbReference>
<dbReference type="InterPro" id="IPR043128">
    <property type="entry name" value="Rev_trsase/Diguanyl_cyclase"/>
</dbReference>
<dbReference type="InterPro" id="IPR012337">
    <property type="entry name" value="RNaseH-like_sf"/>
</dbReference>
<dbReference type="InterPro" id="IPR002156">
    <property type="entry name" value="RNaseH_domain"/>
</dbReference>
<dbReference type="InterPro" id="IPR036397">
    <property type="entry name" value="RNaseH_sf"/>
</dbReference>
<dbReference type="InterPro" id="IPR000477">
    <property type="entry name" value="RT_dom"/>
</dbReference>
<dbReference type="InterPro" id="IPR001878">
    <property type="entry name" value="Znf_CCHC"/>
</dbReference>
<dbReference type="InterPro" id="IPR036875">
    <property type="entry name" value="Znf_CCHC_sf"/>
</dbReference>
<dbReference type="PANTHER" id="PTHR41694">
    <property type="entry name" value="ENDOGENOUS RETROVIRUS GROUP K MEMBER POL PROTEIN"/>
    <property type="match status" value="1"/>
</dbReference>
<dbReference type="PANTHER" id="PTHR41694:SF3">
    <property type="entry name" value="RNA-DIRECTED DNA POLYMERASE-RELATED"/>
    <property type="match status" value="1"/>
</dbReference>
<dbReference type="Pfam" id="PF02228">
    <property type="entry name" value="Gag_p19"/>
    <property type="match status" value="1"/>
</dbReference>
<dbReference type="Pfam" id="PF00607">
    <property type="entry name" value="Gag_p24"/>
    <property type="match status" value="1"/>
</dbReference>
<dbReference type="Pfam" id="PF19317">
    <property type="entry name" value="Gag_p24_C"/>
    <property type="match status" value="1"/>
</dbReference>
<dbReference type="Pfam" id="PF00552">
    <property type="entry name" value="IN_DBD_C"/>
    <property type="match status" value="1"/>
</dbReference>
<dbReference type="Pfam" id="PF02022">
    <property type="entry name" value="Integrase_Zn"/>
    <property type="match status" value="1"/>
</dbReference>
<dbReference type="Pfam" id="PF00075">
    <property type="entry name" value="RNase_H"/>
    <property type="match status" value="1"/>
</dbReference>
<dbReference type="Pfam" id="PF00665">
    <property type="entry name" value="rve"/>
    <property type="match status" value="1"/>
</dbReference>
<dbReference type="Pfam" id="PF00077">
    <property type="entry name" value="RVP"/>
    <property type="match status" value="1"/>
</dbReference>
<dbReference type="Pfam" id="PF00078">
    <property type="entry name" value="RVT_1"/>
    <property type="match status" value="1"/>
</dbReference>
<dbReference type="Pfam" id="PF00098">
    <property type="entry name" value="zf-CCHC"/>
    <property type="match status" value="1"/>
</dbReference>
<dbReference type="SMART" id="SM00343">
    <property type="entry name" value="ZnF_C2HC"/>
    <property type="match status" value="2"/>
</dbReference>
<dbReference type="SUPFAM" id="SSF50630">
    <property type="entry name" value="Acid proteases"/>
    <property type="match status" value="1"/>
</dbReference>
<dbReference type="SUPFAM" id="SSF50122">
    <property type="entry name" value="DNA-binding domain of retroviral integrase"/>
    <property type="match status" value="1"/>
</dbReference>
<dbReference type="SUPFAM" id="SSF56672">
    <property type="entry name" value="DNA/RNA polymerases"/>
    <property type="match status" value="1"/>
</dbReference>
<dbReference type="SUPFAM" id="SSF47836">
    <property type="entry name" value="Retroviral matrix proteins"/>
    <property type="match status" value="1"/>
</dbReference>
<dbReference type="SUPFAM" id="SSF47353">
    <property type="entry name" value="Retrovirus capsid dimerization domain-like"/>
    <property type="match status" value="1"/>
</dbReference>
<dbReference type="SUPFAM" id="SSF47943">
    <property type="entry name" value="Retrovirus capsid protein, N-terminal core domain"/>
    <property type="match status" value="1"/>
</dbReference>
<dbReference type="SUPFAM" id="SSF57756">
    <property type="entry name" value="Retrovirus zinc finger-like domains"/>
    <property type="match status" value="1"/>
</dbReference>
<dbReference type="SUPFAM" id="SSF53098">
    <property type="entry name" value="Ribonuclease H-like"/>
    <property type="match status" value="1"/>
</dbReference>
<dbReference type="PROSITE" id="PS50175">
    <property type="entry name" value="ASP_PROT_RETROV"/>
    <property type="match status" value="1"/>
</dbReference>
<dbReference type="PROSITE" id="PS00141">
    <property type="entry name" value="ASP_PROTEASE"/>
    <property type="match status" value="1"/>
</dbReference>
<dbReference type="PROSITE" id="PS50994">
    <property type="entry name" value="INTEGRASE"/>
    <property type="match status" value="1"/>
</dbReference>
<dbReference type="PROSITE" id="PS51027">
    <property type="entry name" value="INTEGRASE_DBD"/>
    <property type="match status" value="1"/>
</dbReference>
<dbReference type="PROSITE" id="PS50879">
    <property type="entry name" value="RNASE_H_1"/>
    <property type="match status" value="1"/>
</dbReference>
<dbReference type="PROSITE" id="PS50878">
    <property type="entry name" value="RT_POL"/>
    <property type="match status" value="1"/>
</dbReference>
<dbReference type="PROSITE" id="PS50158">
    <property type="entry name" value="ZF_CCHC"/>
    <property type="match status" value="1"/>
</dbReference>